<gene>
    <name evidence="1" type="primary">argB</name>
    <name type="ordered locus">PA14_70280</name>
</gene>
<accession>Q02E39</accession>
<protein>
    <recommendedName>
        <fullName evidence="1">Acetylglutamate kinase</fullName>
        <ecNumber evidence="1">2.7.2.8</ecNumber>
    </recommendedName>
    <alternativeName>
        <fullName evidence="1">N-acetyl-L-glutamate 5-phosphotransferase</fullName>
    </alternativeName>
    <alternativeName>
        <fullName evidence="1">NAG kinase</fullName>
        <shortName evidence="1">NAGK</shortName>
    </alternativeName>
</protein>
<organism>
    <name type="scientific">Pseudomonas aeruginosa (strain UCBPP-PA14)</name>
    <dbReference type="NCBI Taxonomy" id="208963"/>
    <lineage>
        <taxon>Bacteria</taxon>
        <taxon>Pseudomonadati</taxon>
        <taxon>Pseudomonadota</taxon>
        <taxon>Gammaproteobacteria</taxon>
        <taxon>Pseudomonadales</taxon>
        <taxon>Pseudomonadaceae</taxon>
        <taxon>Pseudomonas</taxon>
    </lineage>
</organism>
<comment type="function">
    <text evidence="1">Catalyzes the ATP-dependent phosphorylation of N-acetyl-L-glutamate.</text>
</comment>
<comment type="catalytic activity">
    <reaction evidence="1">
        <text>N-acetyl-L-glutamate + ATP = N-acetyl-L-glutamyl 5-phosphate + ADP</text>
        <dbReference type="Rhea" id="RHEA:14629"/>
        <dbReference type="ChEBI" id="CHEBI:30616"/>
        <dbReference type="ChEBI" id="CHEBI:44337"/>
        <dbReference type="ChEBI" id="CHEBI:57936"/>
        <dbReference type="ChEBI" id="CHEBI:456216"/>
        <dbReference type="EC" id="2.7.2.8"/>
    </reaction>
</comment>
<comment type="pathway">
    <text evidence="1">Amino-acid biosynthesis; L-arginine biosynthesis; N(2)-acetyl-L-ornithine from L-glutamate: step 2/4.</text>
</comment>
<comment type="subcellular location">
    <subcellularLocation>
        <location evidence="1">Cytoplasm</location>
    </subcellularLocation>
</comment>
<comment type="similarity">
    <text evidence="1">Belongs to the acetylglutamate kinase family. ArgB subfamily.</text>
</comment>
<reference key="1">
    <citation type="journal article" date="2006" name="Genome Biol.">
        <title>Genomic analysis reveals that Pseudomonas aeruginosa virulence is combinatorial.</title>
        <authorList>
            <person name="Lee D.G."/>
            <person name="Urbach J.M."/>
            <person name="Wu G."/>
            <person name="Liberati N.T."/>
            <person name="Feinbaum R.L."/>
            <person name="Miyata S."/>
            <person name="Diggins L.T."/>
            <person name="He J."/>
            <person name="Saucier M."/>
            <person name="Deziel E."/>
            <person name="Friedman L."/>
            <person name="Li L."/>
            <person name="Grills G."/>
            <person name="Montgomery K."/>
            <person name="Kucherlapati R."/>
            <person name="Rahme L.G."/>
            <person name="Ausubel F.M."/>
        </authorList>
    </citation>
    <scope>NUCLEOTIDE SEQUENCE [LARGE SCALE GENOMIC DNA]</scope>
    <source>
        <strain>UCBPP-PA14</strain>
    </source>
</reference>
<proteinExistence type="inferred from homology"/>
<feature type="chain" id="PRO_1000010528" description="Acetylglutamate kinase">
    <location>
        <begin position="1"/>
        <end position="301"/>
    </location>
</feature>
<feature type="binding site" evidence="1">
    <location>
        <begin position="68"/>
        <end position="69"/>
    </location>
    <ligand>
        <name>substrate</name>
    </ligand>
</feature>
<feature type="binding site" evidence="1">
    <location>
        <position position="90"/>
    </location>
    <ligand>
        <name>substrate</name>
    </ligand>
</feature>
<feature type="binding site" evidence="1">
    <location>
        <position position="195"/>
    </location>
    <ligand>
        <name>substrate</name>
    </ligand>
</feature>
<feature type="site" description="Transition state stabilizer" evidence="1">
    <location>
        <position position="33"/>
    </location>
</feature>
<feature type="site" description="Transition state stabilizer" evidence="1">
    <location>
        <position position="255"/>
    </location>
</feature>
<name>ARGB_PSEAB</name>
<keyword id="KW-0028">Amino-acid biosynthesis</keyword>
<keyword id="KW-0055">Arginine biosynthesis</keyword>
<keyword id="KW-0067">ATP-binding</keyword>
<keyword id="KW-0963">Cytoplasm</keyword>
<keyword id="KW-0418">Kinase</keyword>
<keyword id="KW-0547">Nucleotide-binding</keyword>
<keyword id="KW-0808">Transferase</keyword>
<sequence>MTLSRDDAAQVAKVLSEALPYIRRFVGKTLVIKYGGNAMESEELKAGFARDVVLMKAVGINPVVVHGGGPQIGDLLKRLSIESHFIDGMRVTDAATMDVVEMVLGGQVNKDIVNLINRHGGSAIGLTGKDAELIRAKKLTVTRQTPEMTKPEIIDIGHVGEVTGVNVGLLNMLVKGDFIPVIAPIGVGSNGESYNINADLVAGKVAEALKAEKLMLLTNIAGLMDKQGQVLTGLSTEQVNELIADGTIYGGMLPKIRCALEAVQGGVTSAHIIDGRVPNAVLLEIFTDSGVGTLISNRKRH</sequence>
<dbReference type="EC" id="2.7.2.8" evidence="1"/>
<dbReference type="EMBL" id="CP000438">
    <property type="protein sequence ID" value="ABJ14706.1"/>
    <property type="molecule type" value="Genomic_DNA"/>
</dbReference>
<dbReference type="RefSeq" id="WP_003096572.1">
    <property type="nucleotide sequence ID" value="NZ_CP034244.1"/>
</dbReference>
<dbReference type="SMR" id="Q02E39"/>
<dbReference type="KEGG" id="pau:PA14_70280"/>
<dbReference type="PseudoCAP" id="PA14_70280"/>
<dbReference type="HOGENOM" id="CLU_053680_0_0_6"/>
<dbReference type="BioCyc" id="PAER208963:G1G74-5916-MONOMER"/>
<dbReference type="UniPathway" id="UPA00068">
    <property type="reaction ID" value="UER00107"/>
</dbReference>
<dbReference type="Proteomes" id="UP000000653">
    <property type="component" value="Chromosome"/>
</dbReference>
<dbReference type="GO" id="GO:0005737">
    <property type="term" value="C:cytoplasm"/>
    <property type="evidence" value="ECO:0007669"/>
    <property type="project" value="UniProtKB-SubCell"/>
</dbReference>
<dbReference type="GO" id="GO:0003991">
    <property type="term" value="F:acetylglutamate kinase activity"/>
    <property type="evidence" value="ECO:0007669"/>
    <property type="project" value="UniProtKB-UniRule"/>
</dbReference>
<dbReference type="GO" id="GO:0005524">
    <property type="term" value="F:ATP binding"/>
    <property type="evidence" value="ECO:0007669"/>
    <property type="project" value="UniProtKB-UniRule"/>
</dbReference>
<dbReference type="GO" id="GO:0042450">
    <property type="term" value="P:arginine biosynthetic process via ornithine"/>
    <property type="evidence" value="ECO:0007669"/>
    <property type="project" value="UniProtKB-UniRule"/>
</dbReference>
<dbReference type="GO" id="GO:0006526">
    <property type="term" value="P:L-arginine biosynthetic process"/>
    <property type="evidence" value="ECO:0007669"/>
    <property type="project" value="UniProtKB-UniPathway"/>
</dbReference>
<dbReference type="CDD" id="cd04250">
    <property type="entry name" value="AAK_NAGK-C"/>
    <property type="match status" value="1"/>
</dbReference>
<dbReference type="FunFam" id="3.40.1160.10:FF:000004">
    <property type="entry name" value="Acetylglutamate kinase"/>
    <property type="match status" value="1"/>
</dbReference>
<dbReference type="Gene3D" id="3.40.1160.10">
    <property type="entry name" value="Acetylglutamate kinase-like"/>
    <property type="match status" value="1"/>
</dbReference>
<dbReference type="HAMAP" id="MF_00082">
    <property type="entry name" value="ArgB"/>
    <property type="match status" value="1"/>
</dbReference>
<dbReference type="InterPro" id="IPR036393">
    <property type="entry name" value="AceGlu_kinase-like_sf"/>
</dbReference>
<dbReference type="InterPro" id="IPR004662">
    <property type="entry name" value="AcgluKinase_fam"/>
</dbReference>
<dbReference type="InterPro" id="IPR037528">
    <property type="entry name" value="ArgB"/>
</dbReference>
<dbReference type="InterPro" id="IPR001048">
    <property type="entry name" value="Asp/Glu/Uridylate_kinase"/>
</dbReference>
<dbReference type="InterPro" id="IPR001057">
    <property type="entry name" value="Glu/AcGlu_kinase"/>
</dbReference>
<dbReference type="InterPro" id="IPR041727">
    <property type="entry name" value="NAGK-C"/>
</dbReference>
<dbReference type="NCBIfam" id="TIGR00761">
    <property type="entry name" value="argB"/>
    <property type="match status" value="1"/>
</dbReference>
<dbReference type="PANTHER" id="PTHR23342">
    <property type="entry name" value="N-ACETYLGLUTAMATE SYNTHASE"/>
    <property type="match status" value="1"/>
</dbReference>
<dbReference type="PANTHER" id="PTHR23342:SF0">
    <property type="entry name" value="N-ACETYLGLUTAMATE SYNTHASE, MITOCHONDRIAL"/>
    <property type="match status" value="1"/>
</dbReference>
<dbReference type="Pfam" id="PF00696">
    <property type="entry name" value="AA_kinase"/>
    <property type="match status" value="1"/>
</dbReference>
<dbReference type="PIRSF" id="PIRSF000728">
    <property type="entry name" value="NAGK"/>
    <property type="match status" value="1"/>
</dbReference>
<dbReference type="PRINTS" id="PR00474">
    <property type="entry name" value="GLU5KINASE"/>
</dbReference>
<dbReference type="SUPFAM" id="SSF53633">
    <property type="entry name" value="Carbamate kinase-like"/>
    <property type="match status" value="1"/>
</dbReference>
<evidence type="ECO:0000255" key="1">
    <source>
        <dbReference type="HAMAP-Rule" id="MF_00082"/>
    </source>
</evidence>